<accession>P69198</accession>
<accession>Q39406</accession>
<accession>Q43394</accession>
<name>POLC2_BRANA</name>
<dbReference type="EMBL" id="D63152">
    <property type="protein sequence ID" value="BAA09633.1"/>
    <property type="molecule type" value="mRNA"/>
</dbReference>
<dbReference type="PIR" id="S65150">
    <property type="entry name" value="S65150"/>
</dbReference>
<dbReference type="RefSeq" id="NP_001412544.1">
    <property type="nucleotide sequence ID" value="NM_001425615.1"/>
</dbReference>
<dbReference type="SMR" id="P69198"/>
<dbReference type="Allergome" id="170">
    <property type="allergen name" value="Bra n 7"/>
</dbReference>
<dbReference type="EnsemblPlants" id="CDX92040">
    <property type="protein sequence ID" value="CDX92040"/>
    <property type="gene ID" value="GSBRNA2T00153702001"/>
</dbReference>
<dbReference type="GeneID" id="106443873"/>
<dbReference type="Gramene" id="CDX92040">
    <property type="protein sequence ID" value="CDX92040"/>
    <property type="gene ID" value="GSBRNA2T00153702001"/>
</dbReference>
<dbReference type="OMA" id="DFAHANA"/>
<dbReference type="OrthoDB" id="26525at2759"/>
<dbReference type="GO" id="GO:0005509">
    <property type="term" value="F:calcium ion binding"/>
    <property type="evidence" value="ECO:0007669"/>
    <property type="project" value="InterPro"/>
</dbReference>
<dbReference type="CDD" id="cd00051">
    <property type="entry name" value="EFh"/>
    <property type="match status" value="1"/>
</dbReference>
<dbReference type="FunFam" id="1.10.238.10:FF:000198">
    <property type="entry name" value="Polcalcin Phl p 7"/>
    <property type="match status" value="1"/>
</dbReference>
<dbReference type="Gene3D" id="1.10.238.10">
    <property type="entry name" value="EF-hand"/>
    <property type="match status" value="1"/>
</dbReference>
<dbReference type="InterPro" id="IPR011992">
    <property type="entry name" value="EF-hand-dom_pair"/>
</dbReference>
<dbReference type="InterPro" id="IPR018247">
    <property type="entry name" value="EF_Hand_1_Ca_BS"/>
</dbReference>
<dbReference type="InterPro" id="IPR002048">
    <property type="entry name" value="EF_hand_dom"/>
</dbReference>
<dbReference type="InterPro" id="IPR039647">
    <property type="entry name" value="EF_hand_pair_protein_CML-like"/>
</dbReference>
<dbReference type="PANTHER" id="PTHR10891">
    <property type="entry name" value="EF-HAND CALCIUM-BINDING DOMAIN CONTAINING PROTEIN"/>
    <property type="match status" value="1"/>
</dbReference>
<dbReference type="Pfam" id="PF13499">
    <property type="entry name" value="EF-hand_7"/>
    <property type="match status" value="1"/>
</dbReference>
<dbReference type="SMART" id="SM00054">
    <property type="entry name" value="EFh"/>
    <property type="match status" value="2"/>
</dbReference>
<dbReference type="SUPFAM" id="SSF47473">
    <property type="entry name" value="EF-hand"/>
    <property type="match status" value="1"/>
</dbReference>
<dbReference type="PROSITE" id="PS00018">
    <property type="entry name" value="EF_HAND_1"/>
    <property type="match status" value="2"/>
</dbReference>
<dbReference type="PROSITE" id="PS50222">
    <property type="entry name" value="EF_HAND_2"/>
    <property type="match status" value="2"/>
</dbReference>
<protein>
    <recommendedName>
        <fullName>Polcalcin Bra n 2</fullName>
    </recommendedName>
    <alternativeName>
        <fullName>Calcium-binding pollen allergen Bra n 2</fullName>
    </alternativeName>
    <allergenName>Bra n 2</allergenName>
</protein>
<proteinExistence type="evidence at protein level"/>
<keyword id="KW-0020">Allergen</keyword>
<keyword id="KW-0106">Calcium</keyword>
<keyword id="KW-0479">Metal-binding</keyword>
<keyword id="KW-0677">Repeat</keyword>
<organism>
    <name type="scientific">Brassica napus</name>
    <name type="common">Rape</name>
    <dbReference type="NCBI Taxonomy" id="3708"/>
    <lineage>
        <taxon>Eukaryota</taxon>
        <taxon>Viridiplantae</taxon>
        <taxon>Streptophyta</taxon>
        <taxon>Embryophyta</taxon>
        <taxon>Tracheophyta</taxon>
        <taxon>Spermatophyta</taxon>
        <taxon>Magnoliopsida</taxon>
        <taxon>eudicotyledons</taxon>
        <taxon>Gunneridae</taxon>
        <taxon>Pentapetalae</taxon>
        <taxon>rosids</taxon>
        <taxon>malvids</taxon>
        <taxon>Brassicales</taxon>
        <taxon>Brassicaceae</taxon>
        <taxon>Brassiceae</taxon>
        <taxon>Brassica</taxon>
    </lineage>
</organism>
<evidence type="ECO:0000255" key="1">
    <source>
        <dbReference type="PROSITE-ProRule" id="PRU00448"/>
    </source>
</evidence>
<comment type="allergen">
    <text>Causes an allergic reaction in human. Binds to IgE.</text>
</comment>
<sequence>MADATEKAEHDRIFKKFDANGDGKISASELGDALKNLGSVTHDDIKRMMAEIDTDGDGYISYQEFSDFASANRGLMKDVAKIF</sequence>
<reference key="1">
    <citation type="journal article" date="1995" name="Plant Mol. Biol.">
        <title>A cDNA clone encoding an IgE-binding protein from Brassica anther has significant sequence similarity to Ca(2+)-binding proteins.</title>
        <authorList>
            <person name="Toriyama K."/>
            <person name="Okada T."/>
            <person name="Watanabe M."/>
            <person name="Ide T."/>
            <person name="Ashida T."/>
            <person name="Xu H."/>
            <person name="Singh M."/>
        </authorList>
    </citation>
    <scope>NUCLEOTIDE SEQUENCE [MRNA]</scope>
    <source>
        <strain>cv. Westar</strain>
        <tissue>Pollen</tissue>
    </source>
</reference>
<feature type="chain" id="PRO_0000073669" description="Polcalcin Bra n 2">
    <location>
        <begin position="1"/>
        <end position="83"/>
    </location>
</feature>
<feature type="domain" description="EF-hand 1" evidence="1">
    <location>
        <begin position="5"/>
        <end position="40"/>
    </location>
</feature>
<feature type="domain" description="EF-hand 2" evidence="1">
    <location>
        <begin position="43"/>
        <end position="75"/>
    </location>
</feature>
<feature type="binding site" evidence="1">
    <location>
        <position position="18"/>
    </location>
    <ligand>
        <name>Ca(2+)</name>
        <dbReference type="ChEBI" id="CHEBI:29108"/>
        <label>1</label>
    </ligand>
</feature>
<feature type="binding site" evidence="1">
    <location>
        <position position="20"/>
    </location>
    <ligand>
        <name>Ca(2+)</name>
        <dbReference type="ChEBI" id="CHEBI:29108"/>
        <label>1</label>
    </ligand>
</feature>
<feature type="binding site" evidence="1">
    <location>
        <position position="22"/>
    </location>
    <ligand>
        <name>Ca(2+)</name>
        <dbReference type="ChEBI" id="CHEBI:29108"/>
        <label>1</label>
    </ligand>
</feature>
<feature type="binding site" evidence="1">
    <location>
        <position position="24"/>
    </location>
    <ligand>
        <name>Ca(2+)</name>
        <dbReference type="ChEBI" id="CHEBI:29108"/>
        <label>1</label>
    </ligand>
</feature>
<feature type="binding site" evidence="1">
    <location>
        <position position="29"/>
    </location>
    <ligand>
        <name>Ca(2+)</name>
        <dbReference type="ChEBI" id="CHEBI:29108"/>
        <label>1</label>
    </ligand>
</feature>
<feature type="binding site" evidence="1">
    <location>
        <position position="53"/>
    </location>
    <ligand>
        <name>Ca(2+)</name>
        <dbReference type="ChEBI" id="CHEBI:29108"/>
        <label>2</label>
    </ligand>
</feature>
<feature type="binding site" evidence="1">
    <location>
        <position position="55"/>
    </location>
    <ligand>
        <name>Ca(2+)</name>
        <dbReference type="ChEBI" id="CHEBI:29108"/>
        <label>2</label>
    </ligand>
</feature>
<feature type="binding site" evidence="1">
    <location>
        <position position="57"/>
    </location>
    <ligand>
        <name>Ca(2+)</name>
        <dbReference type="ChEBI" id="CHEBI:29108"/>
        <label>2</label>
    </ligand>
</feature>
<feature type="binding site" evidence="1">
    <location>
        <position position="59"/>
    </location>
    <ligand>
        <name>Ca(2+)</name>
        <dbReference type="ChEBI" id="CHEBI:29108"/>
        <label>2</label>
    </ligand>
</feature>
<feature type="binding site" evidence="1">
    <location>
        <position position="64"/>
    </location>
    <ligand>
        <name>Ca(2+)</name>
        <dbReference type="ChEBI" id="CHEBI:29108"/>
        <label>2</label>
    </ligand>
</feature>